<keyword id="KW-0067">ATP-binding</keyword>
<keyword id="KW-0963">Cytoplasm</keyword>
<keyword id="KW-0275">Fatty acid biosynthesis</keyword>
<keyword id="KW-0276">Fatty acid metabolism</keyword>
<keyword id="KW-0444">Lipid biosynthesis</keyword>
<keyword id="KW-0443">Lipid metabolism</keyword>
<keyword id="KW-0479">Metal-binding</keyword>
<keyword id="KW-0547">Nucleotide-binding</keyword>
<keyword id="KW-0808">Transferase</keyword>
<keyword id="KW-0862">Zinc</keyword>
<keyword id="KW-0863">Zinc-finger</keyword>
<feature type="chain" id="PRO_0000358976" description="Acetyl-coenzyme A carboxylase carboxyl transferase subunit beta">
    <location>
        <begin position="1"/>
        <end position="291"/>
    </location>
</feature>
<feature type="domain" description="CoA carboxyltransferase N-terminal" evidence="2">
    <location>
        <begin position="23"/>
        <end position="291"/>
    </location>
</feature>
<feature type="zinc finger region" description="C4-type" evidence="1">
    <location>
        <begin position="27"/>
        <end position="49"/>
    </location>
</feature>
<feature type="binding site" evidence="1">
    <location>
        <position position="27"/>
    </location>
    <ligand>
        <name>Zn(2+)</name>
        <dbReference type="ChEBI" id="CHEBI:29105"/>
    </ligand>
</feature>
<feature type="binding site" evidence="1">
    <location>
        <position position="30"/>
    </location>
    <ligand>
        <name>Zn(2+)</name>
        <dbReference type="ChEBI" id="CHEBI:29105"/>
    </ligand>
</feature>
<feature type="binding site" evidence="1">
    <location>
        <position position="46"/>
    </location>
    <ligand>
        <name>Zn(2+)</name>
        <dbReference type="ChEBI" id="CHEBI:29105"/>
    </ligand>
</feature>
<feature type="binding site" evidence="1">
    <location>
        <position position="49"/>
    </location>
    <ligand>
        <name>Zn(2+)</name>
        <dbReference type="ChEBI" id="CHEBI:29105"/>
    </ligand>
</feature>
<comment type="function">
    <text evidence="1">Component of the acetyl coenzyme A carboxylase (ACC) complex. Biotin carboxylase (BC) catalyzes the carboxylation of biotin on its carrier protein (BCCP) and then the CO(2) group is transferred by the transcarboxylase to acetyl-CoA to form malonyl-CoA.</text>
</comment>
<comment type="catalytic activity">
    <reaction evidence="1">
        <text>N(6)-carboxybiotinyl-L-lysyl-[protein] + acetyl-CoA = N(6)-biotinyl-L-lysyl-[protein] + malonyl-CoA</text>
        <dbReference type="Rhea" id="RHEA:54728"/>
        <dbReference type="Rhea" id="RHEA-COMP:10505"/>
        <dbReference type="Rhea" id="RHEA-COMP:10506"/>
        <dbReference type="ChEBI" id="CHEBI:57288"/>
        <dbReference type="ChEBI" id="CHEBI:57384"/>
        <dbReference type="ChEBI" id="CHEBI:83144"/>
        <dbReference type="ChEBI" id="CHEBI:83145"/>
        <dbReference type="EC" id="2.1.3.15"/>
    </reaction>
</comment>
<comment type="cofactor">
    <cofactor evidence="1">
        <name>Zn(2+)</name>
        <dbReference type="ChEBI" id="CHEBI:29105"/>
    </cofactor>
    <text evidence="1">Binds 1 zinc ion per subunit.</text>
</comment>
<comment type="pathway">
    <text evidence="1">Lipid metabolism; malonyl-CoA biosynthesis; malonyl-CoA from acetyl-CoA: step 1/1.</text>
</comment>
<comment type="subunit">
    <text evidence="1">Acetyl-CoA carboxylase is a heterohexamer composed of biotin carboxyl carrier protein (AccB), biotin carboxylase (AccC) and two subunits each of ACCase subunit alpha (AccA) and ACCase subunit beta (AccD).</text>
</comment>
<comment type="subcellular location">
    <subcellularLocation>
        <location evidence="1">Cytoplasm</location>
    </subcellularLocation>
</comment>
<comment type="similarity">
    <text evidence="1">Belongs to the AccD/PCCB family.</text>
</comment>
<proteinExistence type="inferred from homology"/>
<dbReference type="EC" id="2.1.3.15" evidence="1"/>
<dbReference type="EMBL" id="CP000733">
    <property type="protein sequence ID" value="ABS76999.1"/>
    <property type="molecule type" value="Genomic_DNA"/>
</dbReference>
<dbReference type="RefSeq" id="WP_005768761.1">
    <property type="nucleotide sequence ID" value="NC_009727.1"/>
</dbReference>
<dbReference type="SMR" id="A9KFZ6"/>
<dbReference type="KEGG" id="cbd:CBUD_0957"/>
<dbReference type="HOGENOM" id="CLU_015486_1_0_6"/>
<dbReference type="UniPathway" id="UPA00655">
    <property type="reaction ID" value="UER00711"/>
</dbReference>
<dbReference type="Proteomes" id="UP000008555">
    <property type="component" value="Chromosome"/>
</dbReference>
<dbReference type="GO" id="GO:0009329">
    <property type="term" value="C:acetate CoA-transferase complex"/>
    <property type="evidence" value="ECO:0007669"/>
    <property type="project" value="TreeGrafter"/>
</dbReference>
<dbReference type="GO" id="GO:0003989">
    <property type="term" value="F:acetyl-CoA carboxylase activity"/>
    <property type="evidence" value="ECO:0007669"/>
    <property type="project" value="InterPro"/>
</dbReference>
<dbReference type="GO" id="GO:0005524">
    <property type="term" value="F:ATP binding"/>
    <property type="evidence" value="ECO:0007669"/>
    <property type="project" value="UniProtKB-KW"/>
</dbReference>
<dbReference type="GO" id="GO:0016743">
    <property type="term" value="F:carboxyl- or carbamoyltransferase activity"/>
    <property type="evidence" value="ECO:0007669"/>
    <property type="project" value="UniProtKB-UniRule"/>
</dbReference>
<dbReference type="GO" id="GO:0008270">
    <property type="term" value="F:zinc ion binding"/>
    <property type="evidence" value="ECO:0007669"/>
    <property type="project" value="UniProtKB-UniRule"/>
</dbReference>
<dbReference type="GO" id="GO:0006633">
    <property type="term" value="P:fatty acid biosynthetic process"/>
    <property type="evidence" value="ECO:0007669"/>
    <property type="project" value="UniProtKB-KW"/>
</dbReference>
<dbReference type="GO" id="GO:2001295">
    <property type="term" value="P:malonyl-CoA biosynthetic process"/>
    <property type="evidence" value="ECO:0007669"/>
    <property type="project" value="UniProtKB-UniRule"/>
</dbReference>
<dbReference type="Gene3D" id="3.90.226.10">
    <property type="entry name" value="2-enoyl-CoA Hydratase, Chain A, domain 1"/>
    <property type="match status" value="1"/>
</dbReference>
<dbReference type="HAMAP" id="MF_01395">
    <property type="entry name" value="AcetylCoA_CT_beta"/>
    <property type="match status" value="1"/>
</dbReference>
<dbReference type="InterPro" id="IPR034733">
    <property type="entry name" value="AcCoA_carboxyl_beta"/>
</dbReference>
<dbReference type="InterPro" id="IPR000438">
    <property type="entry name" value="Acetyl_CoA_COase_Trfase_b_su"/>
</dbReference>
<dbReference type="InterPro" id="IPR029045">
    <property type="entry name" value="ClpP/crotonase-like_dom_sf"/>
</dbReference>
<dbReference type="InterPro" id="IPR011762">
    <property type="entry name" value="COA_CT_N"/>
</dbReference>
<dbReference type="InterPro" id="IPR041010">
    <property type="entry name" value="Znf-ACC"/>
</dbReference>
<dbReference type="NCBIfam" id="TIGR00515">
    <property type="entry name" value="accD"/>
    <property type="match status" value="1"/>
</dbReference>
<dbReference type="PANTHER" id="PTHR42995">
    <property type="entry name" value="ACETYL-COENZYME A CARBOXYLASE CARBOXYL TRANSFERASE SUBUNIT BETA, CHLOROPLASTIC"/>
    <property type="match status" value="1"/>
</dbReference>
<dbReference type="PANTHER" id="PTHR42995:SF5">
    <property type="entry name" value="ACETYL-COENZYME A CARBOXYLASE CARBOXYL TRANSFERASE SUBUNIT BETA, CHLOROPLASTIC"/>
    <property type="match status" value="1"/>
</dbReference>
<dbReference type="Pfam" id="PF01039">
    <property type="entry name" value="Carboxyl_trans"/>
    <property type="match status" value="1"/>
</dbReference>
<dbReference type="Pfam" id="PF17848">
    <property type="entry name" value="Zn_ribbon_ACC"/>
    <property type="match status" value="1"/>
</dbReference>
<dbReference type="PRINTS" id="PR01070">
    <property type="entry name" value="ACCCTRFRASEB"/>
</dbReference>
<dbReference type="SUPFAM" id="SSF52096">
    <property type="entry name" value="ClpP/crotonase"/>
    <property type="match status" value="1"/>
</dbReference>
<dbReference type="PROSITE" id="PS50980">
    <property type="entry name" value="COA_CT_NTER"/>
    <property type="match status" value="1"/>
</dbReference>
<sequence length="291" mass="32245">MNWFTKLLPKISTAKKKGVPEGVWHKCPSCTAVLYRVELERNLEVCPKCYYHIRLDPRKRLAQFLDEGEQEELAEDILPVDRLKFRDSKKYKDRLSAAQKATEEKEALVVYKGNIYGNPIVAAAFNFFFVGGSMGAAVGERFAAGVEAAISERLPFVCFSTSGGARMQEGLFSLFQMAKTSAVLARLAEYKLPYISVLTDPTMGGVSASLAMLGDVIIAEPNALIGFSGPRVIEQTIRQTLPEGFQRSEFLLEHGAIDMVVDRRELKSTIASLITKLTHQPPPDLPVEESV</sequence>
<gene>
    <name evidence="1" type="primary">accD</name>
    <name type="ordered locus">CBUD_0957</name>
</gene>
<protein>
    <recommendedName>
        <fullName evidence="1">Acetyl-coenzyme A carboxylase carboxyl transferase subunit beta</fullName>
        <shortName evidence="1">ACCase subunit beta</shortName>
        <shortName evidence="1">Acetyl-CoA carboxylase carboxyltransferase subunit beta</shortName>
        <ecNumber evidence="1">2.1.3.15</ecNumber>
    </recommendedName>
</protein>
<evidence type="ECO:0000255" key="1">
    <source>
        <dbReference type="HAMAP-Rule" id="MF_01395"/>
    </source>
</evidence>
<evidence type="ECO:0000255" key="2">
    <source>
        <dbReference type="PROSITE-ProRule" id="PRU01136"/>
    </source>
</evidence>
<organism>
    <name type="scientific">Coxiella burnetii (strain Dugway 5J108-111)</name>
    <dbReference type="NCBI Taxonomy" id="434922"/>
    <lineage>
        <taxon>Bacteria</taxon>
        <taxon>Pseudomonadati</taxon>
        <taxon>Pseudomonadota</taxon>
        <taxon>Gammaproteobacteria</taxon>
        <taxon>Legionellales</taxon>
        <taxon>Coxiellaceae</taxon>
        <taxon>Coxiella</taxon>
    </lineage>
</organism>
<reference key="1">
    <citation type="journal article" date="2009" name="Infect. Immun.">
        <title>Comparative genomics reveal extensive transposon-mediated genomic plasticity and diversity among potential effector proteins within the genus Coxiella.</title>
        <authorList>
            <person name="Beare P.A."/>
            <person name="Unsworth N."/>
            <person name="Andoh M."/>
            <person name="Voth D.E."/>
            <person name="Omsland A."/>
            <person name="Gilk S.D."/>
            <person name="Williams K.P."/>
            <person name="Sobral B.W."/>
            <person name="Kupko J.J. III"/>
            <person name="Porcella S.F."/>
            <person name="Samuel J.E."/>
            <person name="Heinzen R.A."/>
        </authorList>
    </citation>
    <scope>NUCLEOTIDE SEQUENCE [LARGE SCALE GENOMIC DNA]</scope>
    <source>
        <strain>Dugway 5J108-111</strain>
    </source>
</reference>
<accession>A9KFZ6</accession>
<name>ACCD_COXBN</name>